<proteinExistence type="inferred from homology"/>
<organism>
    <name type="scientific">Staphylococcus aureus (strain JH9)</name>
    <dbReference type="NCBI Taxonomy" id="359786"/>
    <lineage>
        <taxon>Bacteria</taxon>
        <taxon>Bacillati</taxon>
        <taxon>Bacillota</taxon>
        <taxon>Bacilli</taxon>
        <taxon>Bacillales</taxon>
        <taxon>Staphylococcaceae</taxon>
        <taxon>Staphylococcus</taxon>
    </lineage>
</organism>
<gene>
    <name evidence="1" type="primary">trhO</name>
    <name type="ordered locus">SaurJH9_2713</name>
</gene>
<comment type="function">
    <text evidence="1">Catalyzes oxygen-dependent 5-hydroxyuridine (ho5U) modification at position 34 in tRNAs.</text>
</comment>
<comment type="catalytic activity">
    <reaction evidence="1">
        <text>uridine(34) in tRNA + AH2 + O2 = 5-hydroxyuridine(34) in tRNA + A + H2O</text>
        <dbReference type="Rhea" id="RHEA:64224"/>
        <dbReference type="Rhea" id="RHEA-COMP:11727"/>
        <dbReference type="Rhea" id="RHEA-COMP:13381"/>
        <dbReference type="ChEBI" id="CHEBI:13193"/>
        <dbReference type="ChEBI" id="CHEBI:15377"/>
        <dbReference type="ChEBI" id="CHEBI:15379"/>
        <dbReference type="ChEBI" id="CHEBI:17499"/>
        <dbReference type="ChEBI" id="CHEBI:65315"/>
        <dbReference type="ChEBI" id="CHEBI:136877"/>
    </reaction>
</comment>
<comment type="similarity">
    <text evidence="1">Belongs to the TrhO family.</text>
</comment>
<protein>
    <recommendedName>
        <fullName evidence="1">tRNA uridine(34) hydroxylase</fullName>
        <ecNumber evidence="1">1.14.-.-</ecNumber>
    </recommendedName>
    <alternativeName>
        <fullName evidence="1">tRNA hydroxylation protein O</fullName>
    </alternativeName>
</protein>
<sequence length="318" mass="37057">MNYQVLLYYKYTTIDDPEQFAQDHLAFCKAHHLKGRILVSTEGINGTLSGTKEETEQYMAHMHADERFKDMVFKIDEAEGHAFKKMHVRPRKEIVALDLEDDVDPRHTTGQYLSPVEFRKALEDDDTVIIDARNDYEFDLGHFRGAIRPDITRFRDLPDWIKENKALFTDKKVVTYCTGGIRCEKFSGWLLKEGFEDVAQLHGGIATYGKDPETKGQYWDGKMYVFDDRISVDINQVEKTIIGKDWFDGKPCERYINCANPECNKQILVSEENETKYLGACSYECAKHERNRYVQANNISDNEWQQRLTNFDDLHQHA</sequence>
<keyword id="KW-0560">Oxidoreductase</keyword>
<keyword id="KW-0819">tRNA processing</keyword>
<feature type="chain" id="PRO_1000081200" description="tRNA uridine(34) hydroxylase">
    <location>
        <begin position="1"/>
        <end position="318"/>
    </location>
</feature>
<feature type="domain" description="Rhodanese" evidence="1">
    <location>
        <begin position="123"/>
        <end position="217"/>
    </location>
</feature>
<feature type="active site" description="Cysteine persulfide intermediate" evidence="1">
    <location>
        <position position="177"/>
    </location>
</feature>
<dbReference type="EC" id="1.14.-.-" evidence="1"/>
<dbReference type="EMBL" id="CP000703">
    <property type="protein sequence ID" value="ABQ50489.1"/>
    <property type="molecule type" value="Genomic_DNA"/>
</dbReference>
<dbReference type="RefSeq" id="WP_001109281.1">
    <property type="nucleotide sequence ID" value="NC_009487.1"/>
</dbReference>
<dbReference type="SMR" id="A5IWB6"/>
<dbReference type="KEGG" id="saj:SaurJH9_2713"/>
<dbReference type="HOGENOM" id="CLU_038878_1_0_9"/>
<dbReference type="GO" id="GO:0016705">
    <property type="term" value="F:oxidoreductase activity, acting on paired donors, with incorporation or reduction of molecular oxygen"/>
    <property type="evidence" value="ECO:0007669"/>
    <property type="project" value="UniProtKB-UniRule"/>
</dbReference>
<dbReference type="GO" id="GO:0006400">
    <property type="term" value="P:tRNA modification"/>
    <property type="evidence" value="ECO:0007669"/>
    <property type="project" value="UniProtKB-UniRule"/>
</dbReference>
<dbReference type="CDD" id="cd01518">
    <property type="entry name" value="RHOD_YceA"/>
    <property type="match status" value="1"/>
</dbReference>
<dbReference type="Gene3D" id="3.30.70.100">
    <property type="match status" value="1"/>
</dbReference>
<dbReference type="Gene3D" id="3.40.250.10">
    <property type="entry name" value="Rhodanese-like domain"/>
    <property type="match status" value="1"/>
</dbReference>
<dbReference type="HAMAP" id="MF_00469">
    <property type="entry name" value="TrhO"/>
    <property type="match status" value="1"/>
</dbReference>
<dbReference type="InterPro" id="IPR001763">
    <property type="entry name" value="Rhodanese-like_dom"/>
</dbReference>
<dbReference type="InterPro" id="IPR036873">
    <property type="entry name" value="Rhodanese-like_dom_sf"/>
</dbReference>
<dbReference type="InterPro" id="IPR022111">
    <property type="entry name" value="Rhodanese_C"/>
</dbReference>
<dbReference type="InterPro" id="IPR020936">
    <property type="entry name" value="TrhO"/>
</dbReference>
<dbReference type="InterPro" id="IPR040503">
    <property type="entry name" value="TRHO_N"/>
</dbReference>
<dbReference type="NCBIfam" id="NF001135">
    <property type="entry name" value="PRK00142.1-3"/>
    <property type="match status" value="1"/>
</dbReference>
<dbReference type="PANTHER" id="PTHR43268:SF3">
    <property type="entry name" value="RHODANESE-LIKE DOMAIN-CONTAINING PROTEIN 7-RELATED"/>
    <property type="match status" value="1"/>
</dbReference>
<dbReference type="PANTHER" id="PTHR43268">
    <property type="entry name" value="THIOSULFATE SULFURTRANSFERASE/RHODANESE-LIKE DOMAIN-CONTAINING PROTEIN 2"/>
    <property type="match status" value="1"/>
</dbReference>
<dbReference type="Pfam" id="PF00581">
    <property type="entry name" value="Rhodanese"/>
    <property type="match status" value="1"/>
</dbReference>
<dbReference type="Pfam" id="PF12368">
    <property type="entry name" value="Rhodanese_C"/>
    <property type="match status" value="1"/>
</dbReference>
<dbReference type="Pfam" id="PF17773">
    <property type="entry name" value="UPF0176_N"/>
    <property type="match status" value="1"/>
</dbReference>
<dbReference type="SMART" id="SM00450">
    <property type="entry name" value="RHOD"/>
    <property type="match status" value="1"/>
</dbReference>
<dbReference type="SUPFAM" id="SSF52821">
    <property type="entry name" value="Rhodanese/Cell cycle control phosphatase"/>
    <property type="match status" value="1"/>
</dbReference>
<dbReference type="PROSITE" id="PS50206">
    <property type="entry name" value="RHODANESE_3"/>
    <property type="match status" value="1"/>
</dbReference>
<accession>A5IWB6</accession>
<reference key="1">
    <citation type="submission" date="2007-05" db="EMBL/GenBank/DDBJ databases">
        <title>Complete sequence of chromosome of Staphylococcus aureus subsp. aureus JH9.</title>
        <authorList>
            <consortium name="US DOE Joint Genome Institute"/>
            <person name="Copeland A."/>
            <person name="Lucas S."/>
            <person name="Lapidus A."/>
            <person name="Barry K."/>
            <person name="Detter J.C."/>
            <person name="Glavina del Rio T."/>
            <person name="Hammon N."/>
            <person name="Israni S."/>
            <person name="Pitluck S."/>
            <person name="Chain P."/>
            <person name="Malfatti S."/>
            <person name="Shin M."/>
            <person name="Vergez L."/>
            <person name="Schmutz J."/>
            <person name="Larimer F."/>
            <person name="Land M."/>
            <person name="Hauser L."/>
            <person name="Kyrpides N."/>
            <person name="Kim E."/>
            <person name="Tomasz A."/>
            <person name="Richardson P."/>
        </authorList>
    </citation>
    <scope>NUCLEOTIDE SEQUENCE [LARGE SCALE GENOMIC DNA]</scope>
    <source>
        <strain>JH9</strain>
    </source>
</reference>
<name>TRHO_STAA9</name>
<evidence type="ECO:0000255" key="1">
    <source>
        <dbReference type="HAMAP-Rule" id="MF_00469"/>
    </source>
</evidence>